<dbReference type="EMBL" id="AE016823">
    <property type="protein sequence ID" value="AAS71403.1"/>
    <property type="molecule type" value="Genomic_DNA"/>
</dbReference>
<dbReference type="RefSeq" id="WP_000868428.1">
    <property type="nucleotide sequence ID" value="NC_005823.1"/>
</dbReference>
<dbReference type="SMR" id="Q72NI4"/>
<dbReference type="GeneID" id="61172973"/>
<dbReference type="KEGG" id="lic:LIC_12850"/>
<dbReference type="HOGENOM" id="CLU_135723_6_2_12"/>
<dbReference type="Proteomes" id="UP000007037">
    <property type="component" value="Chromosome I"/>
</dbReference>
<dbReference type="GO" id="GO:0005737">
    <property type="term" value="C:cytoplasm"/>
    <property type="evidence" value="ECO:0007669"/>
    <property type="project" value="UniProtKB-ARBA"/>
</dbReference>
<dbReference type="GO" id="GO:1990904">
    <property type="term" value="C:ribonucleoprotein complex"/>
    <property type="evidence" value="ECO:0007669"/>
    <property type="project" value="UniProtKB-KW"/>
</dbReference>
<dbReference type="GO" id="GO:0005840">
    <property type="term" value="C:ribosome"/>
    <property type="evidence" value="ECO:0007669"/>
    <property type="project" value="UniProtKB-KW"/>
</dbReference>
<dbReference type="GO" id="GO:0003735">
    <property type="term" value="F:structural constituent of ribosome"/>
    <property type="evidence" value="ECO:0007669"/>
    <property type="project" value="InterPro"/>
</dbReference>
<dbReference type="GO" id="GO:0006412">
    <property type="term" value="P:translation"/>
    <property type="evidence" value="ECO:0007669"/>
    <property type="project" value="UniProtKB-UniRule"/>
</dbReference>
<dbReference type="HAMAP" id="MF_00251">
    <property type="entry name" value="Ribosomal_bL36"/>
    <property type="match status" value="1"/>
</dbReference>
<dbReference type="InterPro" id="IPR000473">
    <property type="entry name" value="Ribosomal_bL36"/>
</dbReference>
<dbReference type="InterPro" id="IPR035977">
    <property type="entry name" value="Ribosomal_bL36_sp"/>
</dbReference>
<dbReference type="NCBIfam" id="TIGR01022">
    <property type="entry name" value="rpmJ_bact"/>
    <property type="match status" value="1"/>
</dbReference>
<dbReference type="PANTHER" id="PTHR42888">
    <property type="entry name" value="50S RIBOSOMAL PROTEIN L36, CHLOROPLASTIC"/>
    <property type="match status" value="1"/>
</dbReference>
<dbReference type="PANTHER" id="PTHR42888:SF1">
    <property type="entry name" value="LARGE RIBOSOMAL SUBUNIT PROTEIN BL36C"/>
    <property type="match status" value="1"/>
</dbReference>
<dbReference type="Pfam" id="PF00444">
    <property type="entry name" value="Ribosomal_L36"/>
    <property type="match status" value="1"/>
</dbReference>
<dbReference type="SUPFAM" id="SSF57840">
    <property type="entry name" value="Ribosomal protein L36"/>
    <property type="match status" value="1"/>
</dbReference>
<dbReference type="PROSITE" id="PS00828">
    <property type="entry name" value="RIBOSOMAL_L36"/>
    <property type="match status" value="1"/>
</dbReference>
<evidence type="ECO:0000255" key="1">
    <source>
        <dbReference type="HAMAP-Rule" id="MF_00251"/>
    </source>
</evidence>
<evidence type="ECO:0000305" key="2"/>
<feature type="chain" id="PRO_0000126204" description="Large ribosomal subunit protein bL36">
    <location>
        <begin position="1"/>
        <end position="37"/>
    </location>
</feature>
<reference key="1">
    <citation type="journal article" date="2004" name="J. Bacteriol.">
        <title>Comparative genomics of two Leptospira interrogans serovars reveals novel insights into physiology and pathogenesis.</title>
        <authorList>
            <person name="Nascimento A.L.T.O."/>
            <person name="Ko A.I."/>
            <person name="Martins E.A.L."/>
            <person name="Monteiro-Vitorello C.B."/>
            <person name="Ho P.L."/>
            <person name="Haake D.A."/>
            <person name="Verjovski-Almeida S."/>
            <person name="Hartskeerl R.A."/>
            <person name="Marques M.V."/>
            <person name="Oliveira M.C."/>
            <person name="Menck C.F.M."/>
            <person name="Leite L.C.C."/>
            <person name="Carrer H."/>
            <person name="Coutinho L.L."/>
            <person name="Degrave W.M."/>
            <person name="Dellagostin O.A."/>
            <person name="El-Dorry H."/>
            <person name="Ferro E.S."/>
            <person name="Ferro M.I.T."/>
            <person name="Furlan L.R."/>
            <person name="Gamberini M."/>
            <person name="Giglioti E.A."/>
            <person name="Goes-Neto A."/>
            <person name="Goldman G.H."/>
            <person name="Goldman M.H.S."/>
            <person name="Harakava R."/>
            <person name="Jeronimo S.M.B."/>
            <person name="Junqueira-de-Azevedo I.L.M."/>
            <person name="Kimura E.T."/>
            <person name="Kuramae E.E."/>
            <person name="Lemos E.G.M."/>
            <person name="Lemos M.V.F."/>
            <person name="Marino C.L."/>
            <person name="Nunes L.R."/>
            <person name="de Oliveira R.C."/>
            <person name="Pereira G.G."/>
            <person name="Reis M.S."/>
            <person name="Schriefer A."/>
            <person name="Siqueira W.J."/>
            <person name="Sommer P."/>
            <person name="Tsai S.M."/>
            <person name="Simpson A.J.G."/>
            <person name="Ferro J.A."/>
            <person name="Camargo L.E.A."/>
            <person name="Kitajima J.P."/>
            <person name="Setubal J.C."/>
            <person name="Van Sluys M.A."/>
        </authorList>
    </citation>
    <scope>NUCLEOTIDE SEQUENCE [LARGE SCALE GENOMIC DNA]</scope>
    <source>
        <strain>Fiocruz L1-130</strain>
    </source>
</reference>
<gene>
    <name evidence="1" type="primary">rpmJ</name>
    <name type="ordered locus">LIC_12850</name>
</gene>
<protein>
    <recommendedName>
        <fullName evidence="1">Large ribosomal subunit protein bL36</fullName>
    </recommendedName>
    <alternativeName>
        <fullName evidence="2">50S ribosomal protein L36</fullName>
    </alternativeName>
</protein>
<organism>
    <name type="scientific">Leptospira interrogans serogroup Icterohaemorrhagiae serovar copenhageni (strain Fiocruz L1-130)</name>
    <dbReference type="NCBI Taxonomy" id="267671"/>
    <lineage>
        <taxon>Bacteria</taxon>
        <taxon>Pseudomonadati</taxon>
        <taxon>Spirochaetota</taxon>
        <taxon>Spirochaetia</taxon>
        <taxon>Leptospirales</taxon>
        <taxon>Leptospiraceae</taxon>
        <taxon>Leptospira</taxon>
    </lineage>
</organism>
<comment type="similarity">
    <text evidence="1">Belongs to the bacterial ribosomal protein bL36 family.</text>
</comment>
<name>RL36_LEPIC</name>
<sequence>MKVRTSVKKICSSCKVIRRKGVIRVICTNPKHKQRQA</sequence>
<proteinExistence type="inferred from homology"/>
<keyword id="KW-0687">Ribonucleoprotein</keyword>
<keyword id="KW-0689">Ribosomal protein</keyword>
<accession>Q72NI4</accession>